<keyword id="KW-0002">3D-structure</keyword>
<keyword id="KW-0240">DNA-directed RNA polymerase</keyword>
<keyword id="KW-0548">Nucleotidyltransferase</keyword>
<keyword id="KW-1185">Reference proteome</keyword>
<keyword id="KW-0804">Transcription</keyword>
<keyword id="KW-0808">Transferase</keyword>
<evidence type="ECO:0000255" key="1">
    <source>
        <dbReference type="HAMAP-Rule" id="MF_01321"/>
    </source>
</evidence>
<evidence type="ECO:0007829" key="2">
    <source>
        <dbReference type="PDB" id="7L7B"/>
    </source>
</evidence>
<comment type="function">
    <text evidence="1">DNA-dependent RNA polymerase catalyzes the transcription of DNA into RNA using the four ribonucleoside triphosphates as substrates.</text>
</comment>
<comment type="catalytic activity">
    <reaction evidence="1">
        <text>RNA(n) + a ribonucleoside 5'-triphosphate = RNA(n+1) + diphosphate</text>
        <dbReference type="Rhea" id="RHEA:21248"/>
        <dbReference type="Rhea" id="RHEA-COMP:14527"/>
        <dbReference type="Rhea" id="RHEA-COMP:17342"/>
        <dbReference type="ChEBI" id="CHEBI:33019"/>
        <dbReference type="ChEBI" id="CHEBI:61557"/>
        <dbReference type="ChEBI" id="CHEBI:140395"/>
        <dbReference type="EC" id="2.7.7.6"/>
    </reaction>
</comment>
<comment type="subunit">
    <text evidence="1">The RNAP catalytic core consists of 2 alpha, 1 beta, 1 beta' and 1 omega subunit. When a sigma factor is associated with the core the holoenzyme is formed, which can initiate transcription.</text>
</comment>
<comment type="similarity">
    <text evidence="1">Belongs to the RNA polymerase beta chain family.</text>
</comment>
<protein>
    <recommendedName>
        <fullName evidence="1">DNA-directed RNA polymerase subunit beta</fullName>
        <shortName evidence="1">RNAP subunit beta</shortName>
        <ecNumber evidence="1">2.7.7.6</ecNumber>
    </recommendedName>
    <alternativeName>
        <fullName evidence="1">RNA polymerase subunit beta</fullName>
    </alternativeName>
    <alternativeName>
        <fullName evidence="1">Transcriptase subunit beta</fullName>
    </alternativeName>
</protein>
<dbReference type="EC" id="2.7.7.6" evidence="1"/>
<dbReference type="EMBL" id="AM180355">
    <property type="protein sequence ID" value="CAJ66881.1"/>
    <property type="molecule type" value="Genomic_DNA"/>
</dbReference>
<dbReference type="RefSeq" id="WP_003436174.1">
    <property type="nucleotide sequence ID" value="NZ_JAUPES010000049.1"/>
</dbReference>
<dbReference type="RefSeq" id="YP_001086530.1">
    <property type="nucleotide sequence ID" value="NC_009089.1"/>
</dbReference>
<dbReference type="PDB" id="7L7B">
    <property type="method" value="EM"/>
    <property type="resolution" value="3.26 A"/>
    <property type="chains" value="C=2-1238"/>
</dbReference>
<dbReference type="PDBsum" id="7L7B"/>
<dbReference type="EMDB" id="EMD-23210"/>
<dbReference type="SMR" id="Q18CF1"/>
<dbReference type="STRING" id="272563.CD630_00660"/>
<dbReference type="ChEMBL" id="CHEMBL2363852"/>
<dbReference type="DrugCentral" id="Q18CF1"/>
<dbReference type="EnsemblBacteria" id="CAJ66881">
    <property type="protein sequence ID" value="CAJ66881"/>
    <property type="gene ID" value="CD630_00660"/>
</dbReference>
<dbReference type="GeneID" id="66352564"/>
<dbReference type="KEGG" id="cdf:CD630_00660"/>
<dbReference type="PATRIC" id="fig|272563.8.peg.77"/>
<dbReference type="eggNOG" id="COG0085">
    <property type="taxonomic scope" value="Bacteria"/>
</dbReference>
<dbReference type="OrthoDB" id="9803954at2"/>
<dbReference type="PhylomeDB" id="Q18CF1"/>
<dbReference type="BioCyc" id="PDIF272563:G12WB-120-MONOMER"/>
<dbReference type="PRO" id="PR:Q18CF1"/>
<dbReference type="Proteomes" id="UP000001978">
    <property type="component" value="Chromosome"/>
</dbReference>
<dbReference type="GO" id="GO:0000428">
    <property type="term" value="C:DNA-directed RNA polymerase complex"/>
    <property type="evidence" value="ECO:0007669"/>
    <property type="project" value="UniProtKB-KW"/>
</dbReference>
<dbReference type="GO" id="GO:0003677">
    <property type="term" value="F:DNA binding"/>
    <property type="evidence" value="ECO:0007669"/>
    <property type="project" value="UniProtKB-UniRule"/>
</dbReference>
<dbReference type="GO" id="GO:0003899">
    <property type="term" value="F:DNA-directed RNA polymerase activity"/>
    <property type="evidence" value="ECO:0007669"/>
    <property type="project" value="UniProtKB-UniRule"/>
</dbReference>
<dbReference type="GO" id="GO:0032549">
    <property type="term" value="F:ribonucleoside binding"/>
    <property type="evidence" value="ECO:0007669"/>
    <property type="project" value="InterPro"/>
</dbReference>
<dbReference type="GO" id="GO:0006351">
    <property type="term" value="P:DNA-templated transcription"/>
    <property type="evidence" value="ECO:0007669"/>
    <property type="project" value="UniProtKB-UniRule"/>
</dbReference>
<dbReference type="CDD" id="cd00653">
    <property type="entry name" value="RNA_pol_B_RPB2"/>
    <property type="match status" value="1"/>
</dbReference>
<dbReference type="FunFam" id="3.90.1800.10:FF:000001">
    <property type="entry name" value="DNA-directed RNA polymerase subunit beta"/>
    <property type="match status" value="1"/>
</dbReference>
<dbReference type="Gene3D" id="2.40.50.100">
    <property type="match status" value="1"/>
</dbReference>
<dbReference type="Gene3D" id="2.40.50.150">
    <property type="match status" value="1"/>
</dbReference>
<dbReference type="Gene3D" id="3.90.1100.10">
    <property type="match status" value="1"/>
</dbReference>
<dbReference type="Gene3D" id="2.30.150.10">
    <property type="entry name" value="DNA-directed RNA polymerase, beta subunit, external 1 domain"/>
    <property type="match status" value="1"/>
</dbReference>
<dbReference type="Gene3D" id="2.40.270.10">
    <property type="entry name" value="DNA-directed RNA polymerase, subunit 2, domain 6"/>
    <property type="match status" value="1"/>
</dbReference>
<dbReference type="Gene3D" id="3.90.1800.10">
    <property type="entry name" value="RNA polymerase alpha subunit dimerisation domain"/>
    <property type="match status" value="1"/>
</dbReference>
<dbReference type="Gene3D" id="3.90.1110.10">
    <property type="entry name" value="RNA polymerase Rpb2, domain 2"/>
    <property type="match status" value="1"/>
</dbReference>
<dbReference type="HAMAP" id="MF_01321">
    <property type="entry name" value="RNApol_bact_RpoB"/>
    <property type="match status" value="1"/>
</dbReference>
<dbReference type="InterPro" id="IPR042107">
    <property type="entry name" value="DNA-dir_RNA_pol_bsu_ext_1_sf"/>
</dbReference>
<dbReference type="InterPro" id="IPR019462">
    <property type="entry name" value="DNA-dir_RNA_pol_bsu_external_1"/>
</dbReference>
<dbReference type="InterPro" id="IPR015712">
    <property type="entry name" value="DNA-dir_RNA_pol_su2"/>
</dbReference>
<dbReference type="InterPro" id="IPR007120">
    <property type="entry name" value="DNA-dir_RNAP_su2_dom"/>
</dbReference>
<dbReference type="InterPro" id="IPR037033">
    <property type="entry name" value="DNA-dir_RNAP_su2_hyb_sf"/>
</dbReference>
<dbReference type="InterPro" id="IPR010243">
    <property type="entry name" value="RNA_pol_bsu_bac"/>
</dbReference>
<dbReference type="InterPro" id="IPR007121">
    <property type="entry name" value="RNA_pol_bsu_CS"/>
</dbReference>
<dbReference type="InterPro" id="IPR007644">
    <property type="entry name" value="RNA_pol_bsu_protrusion"/>
</dbReference>
<dbReference type="InterPro" id="IPR007642">
    <property type="entry name" value="RNA_pol_Rpb2_2"/>
</dbReference>
<dbReference type="InterPro" id="IPR037034">
    <property type="entry name" value="RNA_pol_Rpb2_2_sf"/>
</dbReference>
<dbReference type="InterPro" id="IPR007645">
    <property type="entry name" value="RNA_pol_Rpb2_3"/>
</dbReference>
<dbReference type="InterPro" id="IPR007641">
    <property type="entry name" value="RNA_pol_Rpb2_7"/>
</dbReference>
<dbReference type="InterPro" id="IPR014724">
    <property type="entry name" value="RNA_pol_RPB2_OB-fold"/>
</dbReference>
<dbReference type="NCBIfam" id="NF001616">
    <property type="entry name" value="PRK00405.1"/>
    <property type="match status" value="1"/>
</dbReference>
<dbReference type="NCBIfam" id="TIGR02013">
    <property type="entry name" value="rpoB"/>
    <property type="match status" value="1"/>
</dbReference>
<dbReference type="PANTHER" id="PTHR20856">
    <property type="entry name" value="DNA-DIRECTED RNA POLYMERASE I SUBUNIT 2"/>
    <property type="match status" value="1"/>
</dbReference>
<dbReference type="Pfam" id="PF04563">
    <property type="entry name" value="RNA_pol_Rpb2_1"/>
    <property type="match status" value="1"/>
</dbReference>
<dbReference type="Pfam" id="PF04561">
    <property type="entry name" value="RNA_pol_Rpb2_2"/>
    <property type="match status" value="1"/>
</dbReference>
<dbReference type="Pfam" id="PF04565">
    <property type="entry name" value="RNA_pol_Rpb2_3"/>
    <property type="match status" value="1"/>
</dbReference>
<dbReference type="Pfam" id="PF10385">
    <property type="entry name" value="RNA_pol_Rpb2_45"/>
    <property type="match status" value="1"/>
</dbReference>
<dbReference type="Pfam" id="PF00562">
    <property type="entry name" value="RNA_pol_Rpb2_6"/>
    <property type="match status" value="1"/>
</dbReference>
<dbReference type="Pfam" id="PF04560">
    <property type="entry name" value="RNA_pol_Rpb2_7"/>
    <property type="match status" value="1"/>
</dbReference>
<dbReference type="SUPFAM" id="SSF64484">
    <property type="entry name" value="beta and beta-prime subunits of DNA dependent RNA-polymerase"/>
    <property type="match status" value="1"/>
</dbReference>
<dbReference type="PROSITE" id="PS01166">
    <property type="entry name" value="RNA_POL_BETA"/>
    <property type="match status" value="1"/>
</dbReference>
<reference key="1">
    <citation type="journal article" date="2006" name="Nat. Genet.">
        <title>The multidrug-resistant human pathogen Clostridium difficile has a highly mobile, mosaic genome.</title>
        <authorList>
            <person name="Sebaihia M."/>
            <person name="Wren B.W."/>
            <person name="Mullany P."/>
            <person name="Fairweather N.F."/>
            <person name="Minton N."/>
            <person name="Stabler R."/>
            <person name="Thomson N.R."/>
            <person name="Roberts A.P."/>
            <person name="Cerdeno-Tarraga A.M."/>
            <person name="Wang H."/>
            <person name="Holden M.T.G."/>
            <person name="Wright A."/>
            <person name="Churcher C."/>
            <person name="Quail M.A."/>
            <person name="Baker S."/>
            <person name="Bason N."/>
            <person name="Brooks K."/>
            <person name="Chillingworth T."/>
            <person name="Cronin A."/>
            <person name="Davis P."/>
            <person name="Dowd L."/>
            <person name="Fraser A."/>
            <person name="Feltwell T."/>
            <person name="Hance Z."/>
            <person name="Holroyd S."/>
            <person name="Jagels K."/>
            <person name="Moule S."/>
            <person name="Mungall K."/>
            <person name="Price C."/>
            <person name="Rabbinowitsch E."/>
            <person name="Sharp S."/>
            <person name="Simmonds M."/>
            <person name="Stevens K."/>
            <person name="Unwin L."/>
            <person name="Whithead S."/>
            <person name="Dupuy B."/>
            <person name="Dougan G."/>
            <person name="Barrell B."/>
            <person name="Parkhill J."/>
        </authorList>
    </citation>
    <scope>NUCLEOTIDE SEQUENCE [LARGE SCALE GENOMIC DNA]</scope>
    <source>
        <strain>630</strain>
    </source>
</reference>
<proteinExistence type="evidence at protein level"/>
<sequence length="1238" mass="139323">MPHPVTIGKRTRMSFSKIKEIADVPNLIEIQVDSYEWFLKEGLKEVFDDISPIEDYTGNLILEFVDYSLDDKPKYDIEECKERDATYCAPLKVKVRLINKETGEIKEQEVFMGDFPLMTERGTFVINGAERVIVSQLVRSPGVYYAEERDKTGKRLISSTVIPNRGAWLEYETDSNDVISVRVDRTRKQPVTVLLRALGIGTDAEIIDLLGEDERLSATLEKDNTKTVEEGLVEIYKKLRPGEPPTVESASSLLNALFFDPKRYDLAKVGRYKFNKKLALCYRIMNKISAEDIINPETGEVFVKAGEKISYDLAKAIQNAGINVVNLLMDDDKKVRVIGNNFVDIKSHIDFDIDDLNIKEKVHYPTLKEILDGYSDEEEIKEAIKSRIKELIPKHILLDDIIASISYEFNIFYNIGNIDDIDHLGNRRIRSVGELLQNQVRIGLSRMERVIKERMTVQDMEAITPQALVNIRPVSAAIKEFFGSSQLSQFMDQTNPLSELTHKRRLSALGPGGLSRERAGFEVRDVHHSHYGRMCPIETPEGPNIGLINSLGTYAKINEFGFIESPYRKFDKETSTVTDEIHYLTADEEDLFVRAQANEPLTEDGKFVNHRVVCRTVNGAVEMVPESRVDYMDISPKQVVSVATAMIPFLENDDANRALMGANMQRQAVPLVRREAPIIGTGIEYRAAKDSGAVVVARNSGIAERVTADEIIIKREDGNRDRYNLLKFKRSNSGTCINQTPIINKGDQIIKGDVIADGPATDLGEVALGRNCLIAFMTWEGYNYEDAILINERLVKEDRLSTIHIEEYECEARDTKLGPEEITRDIPNVGDSAIKNLDDRGIIRIGAEVDSGDILVGKVTPKGETELTAEERLLRAIFGEKAREVRDTSLKVPHGESGIIVDVKVFTRENGDDLSPGVNELVRCYIAKKRKIKVGDKMAGRHGNKGVISRVLPEEDMPFMENGTPLDIILNPQGIPSRMNIGQVLEVHLGLAAKTLGWYVATSVFDGANEYDIMDALEEAGYPRDGKLTLYDGRTGESFDNRITVGYMYYLKLHHLVDEKLHARSTGPYSLVTQQPLGGKAQFGGQRFGEMEVWALEAYGAAHILQEILTVKSDDVVGRVRTYEAIVKGENIPEPGIPESFKVLIKELQSLCLDVKVLTDEDQEIEVRESVDEDDTIGEFELDVVNHMGEVEESNIIEEIEDDFAENAEDEDIENLEEFTEDDLFEEEIDFDSDDFDM</sequence>
<organism>
    <name type="scientific">Clostridioides difficile (strain 630)</name>
    <name type="common">Peptoclostridium difficile</name>
    <dbReference type="NCBI Taxonomy" id="272563"/>
    <lineage>
        <taxon>Bacteria</taxon>
        <taxon>Bacillati</taxon>
        <taxon>Bacillota</taxon>
        <taxon>Clostridia</taxon>
        <taxon>Peptostreptococcales</taxon>
        <taxon>Peptostreptococcaceae</taxon>
        <taxon>Clostridioides</taxon>
    </lineage>
</organism>
<accession>Q18CF1</accession>
<feature type="chain" id="PRO_0000300300" description="DNA-directed RNA polymerase subunit beta">
    <location>
        <begin position="1"/>
        <end position="1238"/>
    </location>
</feature>
<feature type="strand" evidence="2">
    <location>
        <begin position="3"/>
        <end position="6"/>
    </location>
</feature>
<feature type="strand" evidence="2">
    <location>
        <begin position="8"/>
        <end position="14"/>
    </location>
</feature>
<feature type="helix" evidence="2">
    <location>
        <begin position="29"/>
        <end position="50"/>
    </location>
</feature>
<feature type="strand" evidence="2">
    <location>
        <begin position="52"/>
        <end position="54"/>
    </location>
</feature>
<feature type="strand" evidence="2">
    <location>
        <begin position="56"/>
        <end position="63"/>
    </location>
</feature>
<feature type="helix" evidence="2">
    <location>
        <begin position="77"/>
        <end position="82"/>
    </location>
</feature>
<feature type="strand" evidence="2">
    <location>
        <begin position="88"/>
        <end position="92"/>
    </location>
</feature>
<feature type="strand" evidence="2">
    <location>
        <begin position="96"/>
        <end position="99"/>
    </location>
</feature>
<feature type="turn" evidence="2">
    <location>
        <begin position="100"/>
        <end position="102"/>
    </location>
</feature>
<feature type="strand" evidence="2">
    <location>
        <begin position="111"/>
        <end position="116"/>
    </location>
</feature>
<feature type="strand" evidence="2">
    <location>
        <begin position="124"/>
        <end position="126"/>
    </location>
</feature>
<feature type="strand" evidence="2">
    <location>
        <begin position="129"/>
        <end position="132"/>
    </location>
</feature>
<feature type="strand" evidence="2">
    <location>
        <begin position="135"/>
        <end position="137"/>
    </location>
</feature>
<feature type="strand" evidence="2">
    <location>
        <begin position="141"/>
        <end position="145"/>
    </location>
</feature>
<feature type="strand" evidence="2">
    <location>
        <begin position="151"/>
        <end position="153"/>
    </location>
</feature>
<feature type="strand" evidence="2">
    <location>
        <begin position="159"/>
        <end position="162"/>
    </location>
</feature>
<feature type="strand" evidence="2">
    <location>
        <begin position="164"/>
        <end position="166"/>
    </location>
</feature>
<feature type="strand" evidence="2">
    <location>
        <begin position="169"/>
        <end position="173"/>
    </location>
</feature>
<feature type="strand" evidence="2">
    <location>
        <begin position="175"/>
        <end position="177"/>
    </location>
</feature>
<feature type="strand" evidence="2">
    <location>
        <begin position="179"/>
        <end position="183"/>
    </location>
</feature>
<feature type="helix" evidence="2">
    <location>
        <begin position="193"/>
        <end position="197"/>
    </location>
</feature>
<feature type="helix" evidence="2">
    <location>
        <begin position="203"/>
        <end position="210"/>
    </location>
</feature>
<feature type="helix" evidence="2">
    <location>
        <begin position="211"/>
        <end position="213"/>
    </location>
</feature>
<feature type="helix" evidence="2">
    <location>
        <begin position="215"/>
        <end position="222"/>
    </location>
</feature>
<feature type="helix" evidence="2">
    <location>
        <begin position="229"/>
        <end position="239"/>
    </location>
</feature>
<feature type="helix" evidence="2">
    <location>
        <begin position="247"/>
        <end position="258"/>
    </location>
</feature>
<feature type="turn" evidence="2">
    <location>
        <begin position="261"/>
        <end position="263"/>
    </location>
</feature>
<feature type="helix" evidence="2">
    <location>
        <begin position="268"/>
        <end position="277"/>
    </location>
</feature>
<feature type="helix" evidence="2">
    <location>
        <begin position="280"/>
        <end position="284"/>
    </location>
</feature>
<feature type="strand" evidence="2">
    <location>
        <begin position="287"/>
        <end position="291"/>
    </location>
</feature>
<feature type="turn" evidence="2">
    <location>
        <begin position="296"/>
        <end position="298"/>
    </location>
</feature>
<feature type="strand" evidence="2">
    <location>
        <begin position="301"/>
        <end position="303"/>
    </location>
</feature>
<feature type="helix" evidence="2">
    <location>
        <begin position="311"/>
        <end position="319"/>
    </location>
</feature>
<feature type="strand" evidence="2">
    <location>
        <begin position="324"/>
        <end position="328"/>
    </location>
</feature>
<feature type="strand" evidence="2">
    <location>
        <begin position="334"/>
        <end position="338"/>
    </location>
</feature>
<feature type="strand" evidence="2">
    <location>
        <begin position="341"/>
        <end position="343"/>
    </location>
</feature>
<feature type="helix" evidence="2">
    <location>
        <begin position="345"/>
        <end position="347"/>
    </location>
</feature>
<feature type="helix" evidence="2">
    <location>
        <begin position="354"/>
        <end position="356"/>
    </location>
</feature>
<feature type="helix" evidence="2">
    <location>
        <begin position="364"/>
        <end position="373"/>
    </location>
</feature>
<feature type="helix" evidence="2">
    <location>
        <begin position="377"/>
        <end position="386"/>
    </location>
</feature>
<feature type="helix" evidence="2">
    <location>
        <begin position="388"/>
        <end position="391"/>
    </location>
</feature>
<feature type="helix" evidence="2">
    <location>
        <begin position="398"/>
        <end position="410"/>
    </location>
</feature>
<feature type="helix" evidence="2">
    <location>
        <begin position="411"/>
        <end position="413"/>
    </location>
</feature>
<feature type="strand" evidence="2">
    <location>
        <begin position="421"/>
        <end position="426"/>
    </location>
</feature>
<feature type="helix" evidence="2">
    <location>
        <begin position="432"/>
        <end position="457"/>
    </location>
</feature>
<feature type="helix" evidence="2">
    <location>
        <begin position="465"/>
        <end position="468"/>
    </location>
</feature>
<feature type="helix" evidence="2">
    <location>
        <begin position="472"/>
        <end position="482"/>
    </location>
</feature>
<feature type="helix" evidence="2">
    <location>
        <begin position="496"/>
        <end position="503"/>
    </location>
</feature>
<feature type="strand" evidence="2">
    <location>
        <begin position="505"/>
        <end position="508"/>
    </location>
</feature>
<feature type="strand" evidence="2">
    <location>
        <begin position="521"/>
        <end position="525"/>
    </location>
</feature>
<feature type="turn" evidence="2">
    <location>
        <begin position="543"/>
        <end position="547"/>
    </location>
</feature>
<feature type="strand" evidence="2">
    <location>
        <begin position="548"/>
        <end position="551"/>
    </location>
</feature>
<feature type="strand" evidence="2">
    <location>
        <begin position="559"/>
        <end position="561"/>
    </location>
</feature>
<feature type="strand" evidence="2">
    <location>
        <begin position="563"/>
        <end position="571"/>
    </location>
</feature>
<feature type="turn" evidence="2">
    <location>
        <begin position="572"/>
        <end position="575"/>
    </location>
</feature>
<feature type="strand" evidence="2">
    <location>
        <begin position="576"/>
        <end position="584"/>
    </location>
</feature>
<feature type="helix" evidence="2">
    <location>
        <begin position="586"/>
        <end position="591"/>
    </location>
</feature>
<feature type="strand" evidence="2">
    <location>
        <begin position="603"/>
        <end position="605"/>
    </location>
</feature>
<feature type="strand" evidence="2">
    <location>
        <begin position="607"/>
        <end position="615"/>
    </location>
</feature>
<feature type="strand" evidence="2">
    <location>
        <begin position="622"/>
        <end position="624"/>
    </location>
</feature>
<feature type="helix" evidence="2">
    <location>
        <begin position="626"/>
        <end position="628"/>
    </location>
</feature>
<feature type="strand" evidence="2">
    <location>
        <begin position="631"/>
        <end position="634"/>
    </location>
</feature>
<feature type="strand" evidence="2">
    <location>
        <begin position="636"/>
        <end position="640"/>
    </location>
</feature>
<feature type="turn" evidence="2">
    <location>
        <begin position="642"/>
        <end position="646"/>
    </location>
</feature>
<feature type="helix" evidence="2">
    <location>
        <begin position="650"/>
        <end position="652"/>
    </location>
</feature>
<feature type="helix" evidence="2">
    <location>
        <begin position="655"/>
        <end position="664"/>
    </location>
</feature>
<feature type="helix" evidence="2">
    <location>
        <begin position="665"/>
        <end position="667"/>
    </location>
</feature>
<feature type="helix" evidence="2">
    <location>
        <begin position="684"/>
        <end position="690"/>
    </location>
</feature>
<feature type="strand" evidence="2">
    <location>
        <begin position="701"/>
        <end position="706"/>
    </location>
</feature>
<feature type="strand" evidence="2">
    <location>
        <begin position="708"/>
        <end position="714"/>
    </location>
</feature>
<feature type="strand" evidence="2">
    <location>
        <begin position="720"/>
        <end position="724"/>
    </location>
</feature>
<feature type="strand" evidence="2">
    <location>
        <begin position="769"/>
        <end position="775"/>
    </location>
</feature>
<feature type="turn" evidence="2">
    <location>
        <begin position="780"/>
        <end position="783"/>
    </location>
</feature>
<feature type="strand" evidence="2">
    <location>
        <begin position="788"/>
        <end position="791"/>
    </location>
</feature>
<feature type="helix" evidence="2">
    <location>
        <begin position="793"/>
        <end position="796"/>
    </location>
</feature>
<feature type="strand" evidence="2">
    <location>
        <begin position="803"/>
        <end position="810"/>
    </location>
</feature>
<feature type="strand" evidence="2">
    <location>
        <begin position="816"/>
        <end position="818"/>
    </location>
</feature>
<feature type="helix" evidence="2">
    <location>
        <begin position="831"/>
        <end position="834"/>
    </location>
</feature>
<feature type="strand" evidence="2">
    <location>
        <begin position="835"/>
        <end position="837"/>
    </location>
</feature>
<feature type="strand" evidence="2">
    <location>
        <begin position="839"/>
        <end position="843"/>
    </location>
</feature>
<feature type="strand" evidence="2">
    <location>
        <begin position="850"/>
        <end position="853"/>
    </location>
</feature>
<feature type="strand" evidence="2">
    <location>
        <begin position="859"/>
        <end position="861"/>
    </location>
</feature>
<feature type="helix" evidence="2">
    <location>
        <begin position="869"/>
        <end position="878"/>
    </location>
</feature>
<feature type="strand" evidence="2">
    <location>
        <begin position="884"/>
        <end position="887"/>
    </location>
</feature>
<feature type="strand" evidence="2">
    <location>
        <begin position="899"/>
        <end position="906"/>
    </location>
</feature>
<feature type="turn" evidence="2">
    <location>
        <begin position="908"/>
        <end position="911"/>
    </location>
</feature>
<feature type="strand" evidence="2">
    <location>
        <begin position="921"/>
        <end position="929"/>
    </location>
</feature>
<feature type="strand" evidence="2">
    <location>
        <begin position="947"/>
        <end position="952"/>
    </location>
</feature>
<feature type="helix" evidence="2">
    <location>
        <begin position="954"/>
        <end position="956"/>
    </location>
</feature>
<feature type="strand" evidence="2">
    <location>
        <begin position="967"/>
        <end position="969"/>
    </location>
</feature>
<feature type="helix" evidence="2">
    <location>
        <begin position="972"/>
        <end position="974"/>
    </location>
</feature>
<feature type="helix" evidence="2">
    <location>
        <begin position="975"/>
        <end position="978"/>
    </location>
</feature>
<feature type="helix" evidence="2">
    <location>
        <begin position="981"/>
        <end position="996"/>
    </location>
</feature>
<feature type="strand" evidence="2">
    <location>
        <begin position="1004"/>
        <end position="1006"/>
    </location>
</feature>
<feature type="helix" evidence="2">
    <location>
        <begin position="1010"/>
        <end position="1020"/>
    </location>
</feature>
<feature type="turn" evidence="2">
    <location>
        <begin position="1033"/>
        <end position="1035"/>
    </location>
</feature>
<feature type="strand" evidence="2">
    <location>
        <begin position="1043"/>
        <end position="1050"/>
    </location>
</feature>
<feature type="helix" evidence="2">
    <location>
        <begin position="1057"/>
        <end position="1059"/>
    </location>
</feature>
<feature type="strand" evidence="2">
    <location>
        <begin position="1071"/>
        <end position="1073"/>
    </location>
</feature>
<feature type="strand" evidence="2">
    <location>
        <begin position="1080"/>
        <end position="1082"/>
    </location>
</feature>
<feature type="helix" evidence="2">
    <location>
        <begin position="1090"/>
        <end position="1099"/>
    </location>
</feature>
<feature type="helix" evidence="2">
    <location>
        <begin position="1102"/>
        <end position="1110"/>
    </location>
</feature>
<feature type="strand" evidence="2">
    <location>
        <begin position="1112"/>
        <end position="1114"/>
    </location>
</feature>
<feature type="helix" evidence="2">
    <location>
        <begin position="1116"/>
        <end position="1128"/>
    </location>
</feature>
<feature type="helix" evidence="2">
    <location>
        <begin position="1139"/>
        <end position="1149"/>
    </location>
</feature>
<feature type="turn" evidence="2">
    <location>
        <begin position="1150"/>
        <end position="1152"/>
    </location>
</feature>
<feature type="strand" evidence="2">
    <location>
        <begin position="1153"/>
        <end position="1158"/>
    </location>
</feature>
<name>RPOB_CLOD6</name>
<gene>
    <name evidence="1" type="primary">rpoB</name>
    <name type="ordered locus">CD630_00660</name>
</gene>